<organism>
    <name type="scientific">Escherichia coli</name>
    <dbReference type="NCBI Taxonomy" id="562"/>
    <lineage>
        <taxon>Bacteria</taxon>
        <taxon>Pseudomonadati</taxon>
        <taxon>Pseudomonadota</taxon>
        <taxon>Gammaproteobacteria</taxon>
        <taxon>Enterobacterales</taxon>
        <taxon>Enterobacteriaceae</taxon>
        <taxon>Escherichia</taxon>
    </lineage>
</organism>
<dbReference type="EMBL" id="DQ100454">
    <property type="protein sequence ID" value="AAZ57198.1"/>
    <property type="molecule type" value="Genomic_DNA"/>
</dbReference>
<dbReference type="RefSeq" id="WP_251004280.1">
    <property type="nucleotide sequence ID" value="NZ_CP061330.1"/>
</dbReference>
<dbReference type="SMR" id="Q3YL96"/>
<dbReference type="GO" id="GO:0005576">
    <property type="term" value="C:extracellular region"/>
    <property type="evidence" value="ECO:0007669"/>
    <property type="project" value="UniProtKB-SubCell"/>
</dbReference>
<dbReference type="GO" id="GO:0003824">
    <property type="term" value="F:catalytic activity"/>
    <property type="evidence" value="ECO:0007669"/>
    <property type="project" value="UniProtKB-ARBA"/>
</dbReference>
<dbReference type="GO" id="GO:0090729">
    <property type="term" value="F:toxin activity"/>
    <property type="evidence" value="ECO:0007669"/>
    <property type="project" value="UniProtKB-KW"/>
</dbReference>
<dbReference type="GO" id="GO:0007155">
    <property type="term" value="P:cell adhesion"/>
    <property type="evidence" value="ECO:0007669"/>
    <property type="project" value="UniProtKB-KW"/>
</dbReference>
<dbReference type="FunFam" id="2.160.20.10:FF:000048">
    <property type="entry name" value="tRNA nuclease CdiA"/>
    <property type="match status" value="1"/>
</dbReference>
<dbReference type="Gene3D" id="2.160.20.10">
    <property type="entry name" value="Single-stranded right-handed beta-helix, Pectin lyase-like"/>
    <property type="match status" value="1"/>
</dbReference>
<dbReference type="InterPro" id="IPR010069">
    <property type="entry name" value="CdiA_FHA1_rpt"/>
</dbReference>
<dbReference type="InterPro" id="IPR008638">
    <property type="entry name" value="FhaB/CdiA-like_TPS"/>
</dbReference>
<dbReference type="InterPro" id="IPR025157">
    <property type="entry name" value="Hemagglutinin_rpt"/>
</dbReference>
<dbReference type="InterPro" id="IPR012334">
    <property type="entry name" value="Pectin_lyas_fold"/>
</dbReference>
<dbReference type="InterPro" id="IPR011050">
    <property type="entry name" value="Pectin_lyase_fold/virulence"/>
</dbReference>
<dbReference type="InterPro" id="IPR006914">
    <property type="entry name" value="VENN_dom"/>
</dbReference>
<dbReference type="NCBIfam" id="TIGR01901">
    <property type="entry name" value="adhes_NPXG"/>
    <property type="match status" value="1"/>
</dbReference>
<dbReference type="NCBIfam" id="TIGR01731">
    <property type="entry name" value="fil_hemag_20aa"/>
    <property type="match status" value="16"/>
</dbReference>
<dbReference type="Pfam" id="PF13332">
    <property type="entry name" value="Fil_haemagg_2"/>
    <property type="match status" value="4"/>
</dbReference>
<dbReference type="Pfam" id="PF04829">
    <property type="entry name" value="PT-VENN"/>
    <property type="match status" value="1"/>
</dbReference>
<dbReference type="Pfam" id="PF05860">
    <property type="entry name" value="TPS"/>
    <property type="match status" value="1"/>
</dbReference>
<dbReference type="SMART" id="SM00912">
    <property type="entry name" value="Haemagg_act"/>
    <property type="match status" value="1"/>
</dbReference>
<dbReference type="SUPFAM" id="SSF51126">
    <property type="entry name" value="Pectin lyase-like"/>
    <property type="match status" value="1"/>
</dbReference>
<reference key="1">
    <citation type="journal article" date="2005" name="Science">
        <title>Contact-dependent inhibition of growth in Escherichia coli.</title>
        <authorList>
            <person name="Aoki S.K."/>
            <person name="Pamma R."/>
            <person name="Hernday A.D."/>
            <person name="Bickham J.E."/>
            <person name="Braaten B.A."/>
            <person name="Low D.A."/>
        </authorList>
    </citation>
    <scope>NUCLEOTIDE SEQUENCE [GENOMIC DNA]</scope>
    <scope>FUNCTION</scope>
    <scope>CLEAVAGE</scope>
    <scope>DISRUPTION PHENOTYPE</scope>
    <source>
        <strain>EC93</strain>
    </source>
</reference>
<reference key="2">
    <citation type="journal article" date="2009" name="J. Bacteriol.">
        <title>Contact-dependent growth inhibition causes reversible metabolic downregulation in Escherichia coli.</title>
        <authorList>
            <person name="Aoki S.K."/>
            <person name="Webb J.S."/>
            <person name="Braaten B.A."/>
            <person name="Low D.A."/>
        </authorList>
    </citation>
    <scope>FUNCTION</scope>
    <source>
        <strain>EC93</strain>
    </source>
</reference>
<reference key="3">
    <citation type="journal article" date="2010" name="Nature">
        <title>A widespread family of polymorphic contact-dependent toxin delivery systems in bacteria.</title>
        <authorList>
            <person name="Aoki S.K."/>
            <person name="Diner E.J."/>
            <person name="de Roodenbeke C.T."/>
            <person name="Burgess B.R."/>
            <person name="Poole S.J."/>
            <person name="Braaten B.A."/>
            <person name="Jones A.M."/>
            <person name="Webb J.S."/>
            <person name="Hayes C.S."/>
            <person name="Cotter P.A."/>
            <person name="Low D.A."/>
        </authorList>
    </citation>
    <scope>FUNCTION</scope>
    <scope>STRAIN SPECIFICITY</scope>
    <scope>DOMAIN</scope>
    <scope>DISRUPTION PHENOTYPE</scope>
    <source>
        <strain>EC93</strain>
    </source>
</reference>
<reference key="4">
    <citation type="journal article" date="2013" name="MBio">
        <title>Receptor polymorphism restricts contact-dependent growth inhibition to members of the same species.</title>
        <authorList>
            <person name="Ruhe Z.C."/>
            <person name="Wallace A.B."/>
            <person name="Low D.A."/>
            <person name="Hayes C.S."/>
        </authorList>
    </citation>
    <scope>FUNCTION</scope>
    <scope>STRAIN SPECIFICITY</scope>
    <source>
        <strain>EC93</strain>
    </source>
</reference>
<reference key="5">
    <citation type="journal article" date="2014" name="Mol. Microbiol.">
        <title>The proton-motive force is required for translocation of CDI toxins across the inner membrane of target bacteria.</title>
        <authorList>
            <person name="Ruhe Z.C."/>
            <person name="Nguyen J.Y."/>
            <person name="Beck C.M."/>
            <person name="Low D.A."/>
            <person name="Hayes C.S."/>
        </authorList>
    </citation>
    <scope>FUNCTION</scope>
    <scope>REQUIRES PMF FOR TRANSLOCATION</scope>
    <scope>SUBCELLULAR LOCATION</scope>
    <source>
        <strain>EC93</strain>
    </source>
</reference>
<reference key="6">
    <citation type="journal article" date="2015" name="Mol. Microbiol.">
        <title>CdiA promotes receptor-independent intercellular adhesion.</title>
        <authorList>
            <person name="Ruhe Z.C."/>
            <person name="Townsley L."/>
            <person name="Wallace A.B."/>
            <person name="King A."/>
            <person name="Van der Woude M.W."/>
            <person name="Low D.A."/>
            <person name="Yildiz F.H."/>
            <person name="Hayes C.S."/>
        </authorList>
    </citation>
    <scope>FUNCTION IN BIOFILM FORMATION</scope>
    <scope>DOMAIN</scope>
    <scope>DISRUPTION PHENOTYPE</scope>
    <source>
        <strain>EC93</strain>
    </source>
</reference>
<reference key="7">
    <citation type="journal article" date="2017" name="MBio">
        <title>CdiA effectors use modular receptor-binding domains to recognize target bacteria.</title>
        <authorList>
            <person name="Ruhe Z.C."/>
            <person name="Nguyen J.Y."/>
            <person name="Xiong J."/>
            <person name="Koskiniemi S."/>
            <person name="Beck C.M."/>
            <person name="Perkins B.R."/>
            <person name="Low D.A."/>
            <person name="Hayes C.S."/>
        </authorList>
    </citation>
    <scope>DOMAIN</scope>
    <source>
        <strain>EC93</strain>
    </source>
</reference>
<reference key="8">
    <citation type="journal article" date="2018" name="Cell">
        <title>Programmed secretion arrest and receptor-triggered toxin export during antibacterial contact-dependent growth inhibition.</title>
        <authorList>
            <person name="Ruhe Z.C."/>
            <person name="Subramanian P."/>
            <person name="Song K."/>
            <person name="Nguyen J.Y."/>
            <person name="Stevens T.A."/>
            <person name="Low D.A."/>
            <person name="Jensen G.J."/>
            <person name="Hayes C.S."/>
        </authorList>
    </citation>
    <scope>SUBCELLULAR LOCATION</scope>
    <scope>DOMAIN</scope>
    <scope>TOPOLOGY</scope>
    <source>
        <strain>EC93</strain>
    </source>
</reference>
<proteinExistence type="evidence at protein level"/>
<accession>Q3YL96</accession>
<gene>
    <name evidence="10" type="primary">cdiA</name>
</gene>
<keyword id="KW-0130">Cell adhesion</keyword>
<keyword id="KW-0964">Secreted</keyword>
<keyword id="KW-0732">Signal</keyword>
<keyword id="KW-1266">Target cell cytoplasm</keyword>
<keyword id="KW-0800">Toxin</keyword>
<keyword id="KW-0843">Virulence</keyword>
<evidence type="ECO:0000256" key="1">
    <source>
        <dbReference type="SAM" id="MobiDB-lite"/>
    </source>
</evidence>
<evidence type="ECO:0000269" key="2">
    <source>
    </source>
</evidence>
<evidence type="ECO:0000269" key="3">
    <source>
    </source>
</evidence>
<evidence type="ECO:0000269" key="4">
    <source>
    </source>
</evidence>
<evidence type="ECO:0000269" key="5">
    <source>
    </source>
</evidence>
<evidence type="ECO:0000269" key="6">
    <source>
    </source>
</evidence>
<evidence type="ECO:0000269" key="7">
    <source>
    </source>
</evidence>
<evidence type="ECO:0000269" key="8">
    <source>
    </source>
</evidence>
<evidence type="ECO:0000269" key="9">
    <source ref="6"/>
</evidence>
<evidence type="ECO:0000303" key="10">
    <source>
    </source>
</evidence>
<evidence type="ECO:0000303" key="11">
    <source>
    </source>
</evidence>
<evidence type="ECO:0000305" key="12"/>
<evidence type="ECO:0000305" key="13">
    <source>
    </source>
</evidence>
<evidence type="ECO:0000305" key="14">
    <source>
    </source>
</evidence>
<evidence type="ECO:0000305" key="15">
    <source>
    </source>
</evidence>
<evidence type="ECO:0000305" key="16">
    <source>
    </source>
</evidence>
<evidence type="ECO:0000305" key="17">
    <source>
    </source>
</evidence>
<evidence type="ECO:0000305" key="18">
    <source ref="6"/>
</evidence>
<comment type="function">
    <text evidence="2 3 4 5 6 9">Toxic component of a toxin-immunity protein module, which functions as a cellular contact-dependent growth inhibition (CDI) system. CDI modules allow bacteria to communicate with and inhibit the growth of closely related neighboring bacteria (target cell counts decrease 1000- to 10(5)-fold) in a contact-dependent fashion. Inhibitory cells must be in logarithmic (not stationary) phase to inhibit growth of their targets, but protein synthesis is not necessary (PubMed:16109881, PubMed:25174572). The presence of P or S but not type 1 pili protects the target cells against growth inhibition for this CDI. BamA on the outer membrane of target cells acts as a receptor for CdiA, while target cell multidrug efflux pump AcrB facilitates its transport into the cytoplasm (PubMed:16109881). Outer membrane receptor function is dependent on extracellular loops of BamA (PubMed:23882017). Cells undergoing CDI show a 2- to 5-fold reversible decrease in aerobic respiration, proton motive force and steady-state ATP levels, suggesting this CT module is an ionophore that disrupts the target cell's inner cell membrane. Growth recovery requires an energy source. Cells expressing this protein in the absence of CdiI initially form filaments, some of which contain multiple nucleoids, while others are devoid of nucleoids. CDI cells induce the phage shock response, but pspA is not required for recovery from CDI (PubMed:19124575). CDI is neutralized by its cognate immunity protein CdiI, but not by non-cognate CdiI from other bacteria with different CDI systems (PubMed:21085179). Plays a role in biofilm formation, a region N-terminal to residue 644 is implicated in this receptor-independent cell adhesion (Ref.6).</text>
</comment>
<comment type="function">
    <text evidence="17">The CdiA protein is thought to be exported from the cell through the central lumen of CdiB, the other half of its two-partner system (TPS). The TPS domain probably remains associated with CdiB while the FHA-1 domain forms an extended filament (33 nm long) with the receptor-binding domain (RBD) at its extremity; in the secretion arrested state the C-terminus of the RBD and YP domains form a hairpin-like structure as the FHA-2, PT and CT domains are periplasmic. The YP domain is probably responsible for this arrest at the point where it re-enters the host cell periplasm. Upon binding to a target cell outer membrane receptor (BamA for this CDI) a signal is transmitted to activate secretion. The filament becomes about 5 nm longer, the rest of CdiA is secreted and the FHA-2 domain becomes stably associated with the target cell's outer membrane where it facilitates entry of the toxic CT domain into the target cell periplasm. From there the toxic CT domain is cleaved and gains access to the target cell cytoplasm via an inner membrane protein (multidrug efflux pump AcrB for this CDI).</text>
</comment>
<comment type="subunit">
    <text evidence="14">Probably interacts with cognate immunity protein CdiI.</text>
</comment>
<comment type="subcellular location">
    <subcellularLocation>
        <location evidence="11">Secreted</location>
    </subcellularLocation>
    <subcellularLocation>
        <location evidence="15">Target cell</location>
        <location evidence="15">Target cell cytoplasm</location>
    </subcellularLocation>
    <text evidence="6 8 12">Secreted to the cell surface by CdiB, its two partner secretion pathway (TPS) partner (Probable). Toxin translocation into the target cell depends on the proton motive force of the target cell, but not on tolA or tonB (PubMed:25174572). Forms multiple filaments that extend away from the host cell surface, averaging 33 nm long; protein truncated at residue 1929 still forms filaments (PubMed:30388452).</text>
</comment>
<comment type="domain">
    <text evidence="4 7 8">The CDI activity resides in the approximately 230 residue C-terminal (CT) domain; exchanging the C-terminal (CT) domain and cdiI gene between different strains confers resistance within cognate but not non-cognate systems (i.e. CdiI-EC93 neutralizes CdiA-CT from strain EC93 but not CdiA-CT from E.coli strain 536 / UPEC, Y.pestis strain CO92 or D.dadantii strain 3937). Intracellular expression of the last 223 residues of CdiA-EC93 inhibits growth, which can be relieved by CdiI from strain EC93 but not 536 / UPEC (PubMed:21085179). Exchanging the outer membrane receptor-binding domains between proteins exchanges the receptors recognized by CdiA (PubMed:28351921). Extracellular filaments are formed by the N-terminus of the protein (residues 1-1929) (PubMed:30388452).</text>
</comment>
<comment type="PTM">
    <text evidence="2">Expressed as 303 kDa protein which can be processed to 284 kDa and 195 kDa forms.</text>
</comment>
<comment type="disruption phenotype">
    <text evidence="2 4 9">Loss of contact-dependent growth inhibition (PubMed:16109881). In competition experiments between EC93 cells encoding or deleted for cdiA and cdiI, cdiA/cdiI minus cells were quickly outcompeted by wild-type, probably due to intraspecies CDI (PubMed:21085179). Decreased biofilm formation (Ref.6).</text>
</comment>
<comment type="similarity">
    <text evidence="12">In the N-terminal section; belongs to the CdiA toxin family.</text>
</comment>
<protein>
    <recommendedName>
        <fullName evidence="10">Toxin CdiA</fullName>
    </recommendedName>
    <alternativeName>
        <fullName>CdiA-EC93</fullName>
    </alternativeName>
</protein>
<sequence>MHQPPVRFTYRLLSYLVSAIIAGQPLLPAVGAVITPQNGAGMDKAANGVPVVNIATPNGAGISHNRFTDYNVGKEGLILNNATGKLNPTQLGGLIQNNPNLKAGGEAKGIINEVTGGKRSLLQGYTEVAGKAANVMVANPYGITCDGCGFINTPHATLTTGKPVMNADGSLQALEVTEGSITINGAGLDGTRSDAVSIIARATEVNAALHAKDLTVTAGANRITADGRVSALKGEGNVPKVAVDTGALGGMYARRIHLTSTESGVGVNLGNLYAREGDIILSSSGKLVLKNSLAGGNTTVTGTDVSLSGDNKAGGNLSVTGTTGLTLNQSRLVTDKNLVLSSSGQIVQNGGELTAGQNAMLSAQHLNQTSGTVNAAENVTLTTTDDTTLKGRSVAGKTLTVSSGSLNNGGTLVAGRDATVKTGTFSNTGTVQGNGLKVTATDLTSTGSIKSGSTLDISARNATLSGDAGAKDRALVTVSGTLENRGRLVSDDVLTLSATQINNSGTLSGAKELVASADTLTTTEKSVTNSDGNLMLDSASSTLAGETSAGGTVSVKGNSLKTTTTAQTQGNSVSVDVQNAQLDGTQAARDILTLNASEKLTHSGKSSAPSLSLSAPELTSSGVLVGSALNTQSQTLTNSGLLQGKASLTVNTQRLDNQQNGTLYSAADLTLDIPDIRNSGLITGDNGLMLNAVSLSNPGKIIADTLSVRATTLDGDGLLQGAGALALAGDTLSLGSNGRWLTAGDLSLRGKTLHTAGTTQGQNLTVQADRWANSGSVQATGNLTASATGQLTSTGDIMSQGDTTLNAATTDNRGSLLSAGTLSLDGNSLDNSGTVQGNHVTIRQNGVTNSGTLTGIAALTLAARMDMASPQPALMNNGGSLLTSGDLTITAGSLANSGAIQAADSLTARLTGELVSTAGSKVTSNGEMALSALNLSNSGQWIAKNLTLKANSLTSAGDITGVDALTLTVNQTLNNHASGKLLSAGVLTLKADSVKNDGQLQGNATTITAGQLTNGGHLQGETLTLAASGGVNNRSGGVLMSRNALNVSTATLSNQGTIQGGGGVSLNATDRLQNDGKILSGSNLTLTAQVLANTGSGLVQAATLLLDVVNTVNGGRVLATGSADVKGTTLNNTGTFQGADLLVNYHTFSNSGTLLGTSGLGVKGSSLLQNGTGRLYSAGNLLLDAQDFSGQGQVVATGDVTLKLIAALTNHGTLAAGKTLSVTSQNAVTNGGVMQGDAMVLGAGEAFTNNGTLTAGKGNSVFSAQRLFLNAPGSLQAGGDVSLNSRSDITISGFTGTAGSLTMNVAGTLLNSALIYAGNNLKLFTDRLHNQHGDILAGNSLWVQKDSSGTANSEIINRSGNIETTRGDITMNTAHLLNSWDAISASHEVIPGSSHGVISPVPENNRWWGVVRHDGVEYLAVYWGKGATVPDEYRIRTGDTETVTVSASGHAARISGGADMHIRAGRLDNEASFILAGGGMTLSGDTLNNQGWQEGTTGKETVWRLASGSLPKAWFTEPWYKVYRQVSPDATEASGTSPAGQYRAVISAAGDVSASFATDTGNTTVMPRAGGAGNTITVPSLNSLTPPTVSQGVSGEALLNESGTGITGPVWNDALPDTLKDIPGALSLSGASVSSYPLPSGNNGYFVPSTDPDSPYLITVNPKLDGLGKVDSSLFAGLYDLLRMQPGEAPRETDPAYTDEKQFLGSSYILDRLGLKPEKDYRFLGDAAFDTRYVSNVILNQTGSRYINGTGSDLAQMKYLMDSAAAQQKALGLTFGVSLTAGQVAQLTRSLLWWESVTINGQTVMVPKLYLSPEDITLHNGSVISGNNVQLAGGNITNSGSSINAQNDLLLDRTGSIDNLNAGLINAGGALNLKAIGDIGNISSVISGKTVSLESATGNISNLTRTEQWAMNNGYNHFSGTDTGPLAAVRATDSLFMGAAGDISITGAAVSAGDSVLLAAGNDLNMNAIQAGERRRYGGSGWYETHAVAPTVTAGNSLMLSAGRDVNSQAAGITAENSMDIRAGRDVNMAAESTGAGDHDSTFSMKTVHDSVRQQGTDMTSGGDITVTAGRDITSVATAVTAKGDIRVNAGHDIVLGTATESDYHYSESGETRNRLLSHQTTRTITEDSVTREKGSLLSGNRVTVNAGNNLTVQGSDVVADRDVSLAADNHVDVLAATSTDTSWRFKETKTSGLTGTGGIGFTTGSSKTTHDRREAGTTQSQSASTIGSTAGNVSITAGKQAHISGSDVIANRDISITGDSVVVDPGHDRRTVDEKFEQKKSGLTVALSGAVGSAINNAVTMAREAKETSDSRLAALKGTQAVLSGVQAGVNHGLQQQSADPNNGIGVSISLNHQQSKSETKYQHDIVSGSTLSAGNNVSVTATGKNKDHNNSGDMLITGSQIKSGNDTSLNAQNDILLAAAADTRQTTGKNSSKGGGVGVSFGGGTNGGGLSIFAGINGSEGREKGNGTTWTETTLDAGKNVSLTSGRDTTLSGAQVSGEKVTADVGNNLTISSLQDSDRYDSRQNRVAAGGSFTFGSMSGSGYASISQDKIKSNYDSVREQSGIYAGKDGFDVTVGNHTQLNGAVIASTATDDKNSLNTNTLGWSDIHNQADYKASHTGISLSGGSGMSASQMVASNAIAGAANALTGMSGSSGHAEGTTSSAISGGNLIIRNKESQKQDIAGLSRDPENANGSIAPIFDREKEQKRLQEAQVISQISGQMSNIVMTYGETEAMKAARKEHPGMSDAQLRETPEYREVMKGYGTGSTPQMVVQAITGVLGGLNAGNPGQVLAGGLNPAVAQLIKQATGDNREANLMAHAVWGALAAQLGGNNAASGAAGAFSGELAARYIIDNYYGGRTDNLSEQERQQISMLATIASGIAGGLVGNSTSAAGTGAQAGRNSVENNAMSGLEGFGTGFQSYVQAQEALVNNTNLTDKNGKVLNPATPEEIKYASDKLVTGSIPEGQDPARGLLISWGAGASVFGGELIAPAVGTVAVIGGTLLGGTTDAVKQFLTLKPGEQYSTTDTLIAAGEGGLTQGKGVIFSTFINTMGAYLGSKAKGEDPTGPMVGNAIGTALGNKAGDKFTKEMLSRGFGSVTSEVTGTVTGSVIGTVTDYQIEKLGKGNKEGAK</sequence>
<feature type="signal peptide" description="Signal" evidence="11">
    <location>
        <begin position="1"/>
        <end position="32"/>
    </location>
</feature>
<feature type="chain" id="PRO_0000432089" description="Toxin CdiA">
    <location>
        <begin position="33"/>
        <end position="3132"/>
    </location>
</feature>
<feature type="region of interest" description="Two-partner system transport domain (TPS)" evidence="18">
    <location>
        <begin position="36"/>
        <end position="322"/>
    </location>
</feature>
<feature type="region of interest" description="FHA-1" evidence="17">
    <location>
        <begin position="351"/>
        <end position="1378"/>
    </location>
</feature>
<feature type="region of interest" description="Receptor-binding domain (RBD)" evidence="16">
    <location>
        <begin position="1379"/>
        <end position="1635"/>
    </location>
</feature>
<feature type="region of interest" description="YP domain" evidence="17">
    <location>
        <begin position="1636"/>
        <end position="1820"/>
    </location>
</feature>
<feature type="region of interest" description="Periplasmic FHA-1 repeat (pFR)" evidence="17">
    <location>
        <begin position="1821"/>
        <end position="1859"/>
    </location>
</feature>
<feature type="region of interest" description="FHA-2" evidence="16">
    <location>
        <begin position="1930"/>
        <end position="2526"/>
    </location>
</feature>
<feature type="region of interest" description="Disordered" evidence="1">
    <location>
        <begin position="2195"/>
        <end position="2228"/>
    </location>
</feature>
<feature type="region of interest" description="Disordered" evidence="1">
    <location>
        <begin position="2456"/>
        <end position="2497"/>
    </location>
</feature>
<feature type="region of interest" description="Pre-toxin (PT) domain" evidence="16">
    <location>
        <begin position="2862"/>
        <end position="2904"/>
    </location>
</feature>
<feature type="region of interest" description="C-terminal effector domain (CT)" evidence="13">
    <location>
        <begin position="2909"/>
        <end position="3121"/>
    </location>
</feature>
<feature type="short sequence motif" description="VENN CT cleavage motif" evidence="12">
    <location>
        <begin position="2905"/>
        <end position="2908"/>
    </location>
</feature>
<feature type="compositionally biased region" description="Polar residues" evidence="1">
    <location>
        <begin position="2217"/>
        <end position="2228"/>
    </location>
</feature>
<feature type="compositionally biased region" description="Polar residues" evidence="1">
    <location>
        <begin position="2483"/>
        <end position="2497"/>
    </location>
</feature>
<name>CDIA_ECOLX</name>